<accession>Q9HDN1</accession>
<reference key="1">
    <citation type="journal article" date="2000" name="Appl. Environ. Microbiol.">
        <title>Isolation and use of a homologous histone H4 promoter and a ribosomal DNA region in a transformation vector for the oil-producing fungus Mortierella alpina.</title>
        <authorList>
            <person name="MacKenzie D.A."/>
            <person name="Wongwathanarat P."/>
            <person name="Carter A.T."/>
            <person name="Archer D.B."/>
        </authorList>
    </citation>
    <scope>NUCLEOTIDE SEQUENCE [GENOMIC DNA]</scope>
    <source>
        <strain>ATCC 32222 / CBS 528.72 / M136</strain>
    </source>
</reference>
<sequence length="136" mass="15362">MARTKQTARKSTGGKAPRKQLATKAARKSAPATGGVKKPHRYRPGTVALREIRRYQKSTELLIRKLPFQRLVREIAQDFKTDLRFQSSAIGALQEASEAYLVSLFEDTNLAAIHAKRVTIQPKDIHLARRLRGERT</sequence>
<dbReference type="EMBL" id="AJ249812">
    <property type="protein sequence ID" value="CAC14792.1"/>
    <property type="molecule type" value="Genomic_DNA"/>
</dbReference>
<dbReference type="EMBL" id="AJ249813">
    <property type="protein sequence ID" value="CAC14794.1"/>
    <property type="molecule type" value="Genomic_DNA"/>
</dbReference>
<dbReference type="SMR" id="Q9HDN1"/>
<dbReference type="OrthoDB" id="842664at2759"/>
<dbReference type="GO" id="GO:0000786">
    <property type="term" value="C:nucleosome"/>
    <property type="evidence" value="ECO:0007669"/>
    <property type="project" value="UniProtKB-KW"/>
</dbReference>
<dbReference type="GO" id="GO:0005634">
    <property type="term" value="C:nucleus"/>
    <property type="evidence" value="ECO:0007669"/>
    <property type="project" value="UniProtKB-SubCell"/>
</dbReference>
<dbReference type="GO" id="GO:0003677">
    <property type="term" value="F:DNA binding"/>
    <property type="evidence" value="ECO:0007669"/>
    <property type="project" value="UniProtKB-KW"/>
</dbReference>
<dbReference type="GO" id="GO:0046982">
    <property type="term" value="F:protein heterodimerization activity"/>
    <property type="evidence" value="ECO:0007669"/>
    <property type="project" value="InterPro"/>
</dbReference>
<dbReference type="GO" id="GO:0030527">
    <property type="term" value="F:structural constituent of chromatin"/>
    <property type="evidence" value="ECO:0007669"/>
    <property type="project" value="InterPro"/>
</dbReference>
<dbReference type="CDD" id="cd22911">
    <property type="entry name" value="HFD_H3"/>
    <property type="match status" value="1"/>
</dbReference>
<dbReference type="FunFam" id="1.10.20.10:FF:000001">
    <property type="entry name" value="Histone H3"/>
    <property type="match status" value="1"/>
</dbReference>
<dbReference type="Gene3D" id="1.10.20.10">
    <property type="entry name" value="Histone, subunit A"/>
    <property type="match status" value="1"/>
</dbReference>
<dbReference type="InterPro" id="IPR009072">
    <property type="entry name" value="Histone-fold"/>
</dbReference>
<dbReference type="InterPro" id="IPR007125">
    <property type="entry name" value="Histone_H2A/H2B/H3"/>
</dbReference>
<dbReference type="InterPro" id="IPR000164">
    <property type="entry name" value="Histone_H3/CENP-A"/>
</dbReference>
<dbReference type="PANTHER" id="PTHR11426">
    <property type="entry name" value="HISTONE H3"/>
    <property type="match status" value="1"/>
</dbReference>
<dbReference type="Pfam" id="PF00125">
    <property type="entry name" value="Histone"/>
    <property type="match status" value="1"/>
</dbReference>
<dbReference type="PRINTS" id="PR00622">
    <property type="entry name" value="HISTONEH3"/>
</dbReference>
<dbReference type="SMART" id="SM00428">
    <property type="entry name" value="H3"/>
    <property type="match status" value="1"/>
</dbReference>
<dbReference type="SUPFAM" id="SSF47113">
    <property type="entry name" value="Histone-fold"/>
    <property type="match status" value="1"/>
</dbReference>
<dbReference type="PROSITE" id="PS00322">
    <property type="entry name" value="HISTONE_H3_1"/>
    <property type="match status" value="1"/>
</dbReference>
<dbReference type="PROSITE" id="PS00959">
    <property type="entry name" value="HISTONE_H3_2"/>
    <property type="match status" value="1"/>
</dbReference>
<proteinExistence type="inferred from homology"/>
<feature type="initiator methionine" description="Removed" evidence="1">
    <location>
        <position position="1"/>
    </location>
</feature>
<feature type="chain" id="PRO_0000221363" description="Histone H3">
    <location>
        <begin position="2"/>
        <end position="136"/>
    </location>
</feature>
<feature type="region of interest" description="Disordered" evidence="2">
    <location>
        <begin position="1"/>
        <end position="45"/>
    </location>
</feature>
<feature type="modified residue" description="N6,N6,N6-trimethyllysine; alternate" evidence="1">
    <location>
        <position position="5"/>
    </location>
</feature>
<feature type="modified residue" description="N6,N6-dimethyllysine; alternate" evidence="1">
    <location>
        <position position="5"/>
    </location>
</feature>
<feature type="modified residue" description="N6-methyllysine; alternate" evidence="1">
    <location>
        <position position="5"/>
    </location>
</feature>
<feature type="modified residue" description="N6-acetyllysine; alternate" evidence="1">
    <location>
        <position position="10"/>
    </location>
</feature>
<feature type="modified residue" description="N6-methyllysine; alternate" evidence="1">
    <location>
        <position position="10"/>
    </location>
</feature>
<feature type="modified residue" description="Phosphoserine" evidence="1">
    <location>
        <position position="11"/>
    </location>
</feature>
<feature type="modified residue" description="N6,N6-dimethyllysine; alternate" evidence="1">
    <location>
        <position position="15"/>
    </location>
</feature>
<feature type="modified residue" description="N6-acetyllysine; alternate" evidence="1">
    <location>
        <position position="15"/>
    </location>
</feature>
<feature type="modified residue" description="N6-methyllysine; alternate" evidence="1">
    <location>
        <position position="15"/>
    </location>
</feature>
<feature type="modified residue" description="N6-acetyllysine; alternate" evidence="1">
    <location>
        <position position="19"/>
    </location>
</feature>
<feature type="modified residue" description="N6-methyllysine; alternate" evidence="1">
    <location>
        <position position="19"/>
    </location>
</feature>
<feature type="modified residue" description="N6-acetyllysine; alternate" evidence="1">
    <location>
        <position position="24"/>
    </location>
</feature>
<feature type="modified residue" description="N6-methyllysine; alternate" evidence="1">
    <location>
        <position position="24"/>
    </location>
</feature>
<feature type="modified residue" description="N6,N6,N6-trimethyllysine; alternate" evidence="1">
    <location>
        <position position="28"/>
    </location>
</feature>
<feature type="modified residue" description="N6,N6-dimethyllysine; alternate" evidence="1">
    <location>
        <position position="28"/>
    </location>
</feature>
<feature type="modified residue" description="N6-acetyllysine; alternate" evidence="1">
    <location>
        <position position="28"/>
    </location>
</feature>
<feature type="modified residue" description="N6-methyllysine; alternate" evidence="1">
    <location>
        <position position="28"/>
    </location>
</feature>
<feature type="modified residue" description="N6,N6,N6-trimethyllysine; alternate" evidence="1">
    <location>
        <position position="37"/>
    </location>
</feature>
<feature type="modified residue" description="N6,N6-dimethyllysine; alternate" evidence="1">
    <location>
        <position position="37"/>
    </location>
</feature>
<feature type="modified residue" description="N6-acetyllysine; alternate" evidence="1">
    <location>
        <position position="37"/>
    </location>
</feature>
<feature type="modified residue" description="N6-methyllysine; alternate" evidence="1">
    <location>
        <position position="37"/>
    </location>
</feature>
<feature type="modified residue" description="N6-acetyllysine" evidence="1">
    <location>
        <position position="57"/>
    </location>
</feature>
<feature type="modified residue" description="N6-acetyllysine" evidence="1">
    <location>
        <position position="65"/>
    </location>
</feature>
<feature type="modified residue" description="N6,N6,N6-trimethyllysine; alternate" evidence="1">
    <location>
        <position position="80"/>
    </location>
</feature>
<feature type="modified residue" description="N6,N6-dimethyllysine; alternate" evidence="1">
    <location>
        <position position="80"/>
    </location>
</feature>
<feature type="modified residue" description="N6-methyllysine; alternate" evidence="1">
    <location>
        <position position="80"/>
    </location>
</feature>
<organism>
    <name type="scientific">Mortierella alpina</name>
    <name type="common">Oleaginous fungus</name>
    <name type="synonym">Mortierella renispora</name>
    <dbReference type="NCBI Taxonomy" id="64518"/>
    <lineage>
        <taxon>Eukaryota</taxon>
        <taxon>Fungi</taxon>
        <taxon>Fungi incertae sedis</taxon>
        <taxon>Mucoromycota</taxon>
        <taxon>Mortierellomycotina</taxon>
        <taxon>Mortierellomycetes</taxon>
        <taxon>Mortierellales</taxon>
        <taxon>Mortierellaceae</taxon>
        <taxon>Mortierella</taxon>
    </lineage>
</organism>
<comment type="function">
    <text>Core component of nucleosome. Nucleosomes wrap and compact DNA into chromatin, limiting DNA accessibility to the cellular machineries which require DNA as a template. Histones thereby play a central role in transcription regulation, DNA repair, DNA replication and chromosomal stability. DNA accessibility is regulated via a complex set of post-translational modifications of histones, also called histone code, and nucleosome remodeling.</text>
</comment>
<comment type="subunit">
    <text>The nucleosome is a histone octamer containing two molecules each of H2A, H2B, H3 and H4 assembled in one H3-H4 heterotetramer and two H2A-H2B heterodimers. The octamer wraps approximately 147 bp of DNA.</text>
</comment>
<comment type="subcellular location">
    <subcellularLocation>
        <location evidence="1">Nucleus</location>
    </subcellularLocation>
    <subcellularLocation>
        <location evidence="1">Chromosome</location>
    </subcellularLocation>
</comment>
<comment type="PTM">
    <text evidence="1">Phosphorylated to form H3S10ph. H3S10ph promotes subsequent H3K14ac formation and is required for transcriptional activation through TBP recruitment to the promoters (By similarity).</text>
</comment>
<comment type="PTM">
    <text evidence="1">Mono-, di- and trimethylated by the COMPASS complex to form H3K4me1/2/3. H3K4me activates gene expression by regulating transcription elongation and plays a role in telomere length maintenance. H3K4me enrichment correlates with transcription levels, and occurs in a 5' to 3' gradient with H3K4me3 enrichment at the 5'-end of genes, shifting to H3K4me2 and then H3K4me1. Methylated by SET2 to form H3K36me. H3K36me represses gene expression. Methylated by DOT1 to form H3K79me. H3K79me is required for association of SIR proteins with telomeric regions and for telomeric silencing. The COMPASS-mediated formation of H3K4me2/3 and the DOT1-mediated formation of H3K79me require H2BK123ub1 (By similarity).</text>
</comment>
<comment type="PTM">
    <text evidence="1">Acetylation of histone H3 leads to transcriptional activation. H3K14ac formation by GCN5 is promoted by H3S10ph. H3K14ac can also be formed by ESA1. H3K56ac formation occurs predominantly in newly synthesized H3 molecules during G1, S and G2/M of the cell cycle and may be involved in DNA repair (By similarity).</text>
</comment>
<comment type="similarity">
    <text evidence="3">Belongs to the histone H3 family.</text>
</comment>
<comment type="caution">
    <text evidence="3">To ensure consistency between histone entries, we follow the 'Brno' nomenclature for histone modifications, with positions referring to those used in the literature for the 'closest' model organism. Due to slight variations in histone sequences between organisms and to the presence of initiator methionine in UniProtKB/Swiss-Prot sequences, the actual positions of modified amino acids in the sequence generally differ. In this entry the following conventions are used: H3K4me1/2/3 = mono-, di- and trimethylated Lys-5; H3K9ac = acetylated Lys-10; H3K9me1 = monomethylated Lys-10; H3S10ph = phosphorylated Ser-11; H3K14ac = acetylated Lys-15; H3K14me2 = dimethylated Lys-15; H3K18ac = acetylated Lys-19; H3K18me1 = monomethylated Lys-19; H3K23ac = acetylated Lys-24; H3K23me1 = monomethylated Lys-24; H3K27ac = acetylated Lys-28; H3K27me1/2/3 = mono-, di- and trimethylated Lys-28; H3K36ac = acetylated Lys-37; H3K36me1/2/3 = mono-, di- and trimethylated Lys-37; H3K56ac = acetylated Lys-57; H3K64ac = acetylated Lys-65; H3K79me1/2/3 = mono-, di- and trimethylated Lys-80.</text>
</comment>
<keyword id="KW-0007">Acetylation</keyword>
<keyword id="KW-0158">Chromosome</keyword>
<keyword id="KW-0238">DNA-binding</keyword>
<keyword id="KW-0488">Methylation</keyword>
<keyword id="KW-0544">Nucleosome core</keyword>
<keyword id="KW-0539">Nucleus</keyword>
<keyword id="KW-0597">Phosphoprotein</keyword>
<name>H3_MORAP</name>
<evidence type="ECO:0000250" key="1"/>
<evidence type="ECO:0000256" key="2">
    <source>
        <dbReference type="SAM" id="MobiDB-lite"/>
    </source>
</evidence>
<evidence type="ECO:0000305" key="3"/>
<protein>
    <recommendedName>
        <fullName>Histone H3</fullName>
    </recommendedName>
</protein>
<gene>
    <name type="primary">H3.1</name>
</gene>
<gene>
    <name type="primary">H3.2</name>
</gene>